<protein>
    <recommendedName>
        <fullName evidence="1">Small ribosomal subunit protein uS14</fullName>
    </recommendedName>
    <alternativeName>
        <fullName evidence="2">30S ribosomal protein S14</fullName>
    </alternativeName>
</protein>
<dbReference type="EMBL" id="CR378663">
    <property type="protein sequence ID" value="CAG18772.1"/>
    <property type="molecule type" value="Genomic_DNA"/>
</dbReference>
<dbReference type="RefSeq" id="WP_006232352.1">
    <property type="nucleotide sequence ID" value="NC_006370.1"/>
</dbReference>
<dbReference type="SMR" id="Q6LVA3"/>
<dbReference type="STRING" id="298386.PBPRA0333"/>
<dbReference type="KEGG" id="ppr:PBPRA0333"/>
<dbReference type="eggNOG" id="COG0199">
    <property type="taxonomic scope" value="Bacteria"/>
</dbReference>
<dbReference type="HOGENOM" id="CLU_139869_0_1_6"/>
<dbReference type="Proteomes" id="UP000000593">
    <property type="component" value="Chromosome 1"/>
</dbReference>
<dbReference type="GO" id="GO:0005737">
    <property type="term" value="C:cytoplasm"/>
    <property type="evidence" value="ECO:0007669"/>
    <property type="project" value="UniProtKB-ARBA"/>
</dbReference>
<dbReference type="GO" id="GO:0015935">
    <property type="term" value="C:small ribosomal subunit"/>
    <property type="evidence" value="ECO:0007669"/>
    <property type="project" value="TreeGrafter"/>
</dbReference>
<dbReference type="GO" id="GO:0019843">
    <property type="term" value="F:rRNA binding"/>
    <property type="evidence" value="ECO:0007669"/>
    <property type="project" value="UniProtKB-UniRule"/>
</dbReference>
<dbReference type="GO" id="GO:0003735">
    <property type="term" value="F:structural constituent of ribosome"/>
    <property type="evidence" value="ECO:0007669"/>
    <property type="project" value="InterPro"/>
</dbReference>
<dbReference type="GO" id="GO:0006412">
    <property type="term" value="P:translation"/>
    <property type="evidence" value="ECO:0007669"/>
    <property type="project" value="UniProtKB-UniRule"/>
</dbReference>
<dbReference type="FunFam" id="1.10.287.1480:FF:000001">
    <property type="entry name" value="30S ribosomal protein S14"/>
    <property type="match status" value="1"/>
</dbReference>
<dbReference type="Gene3D" id="1.10.287.1480">
    <property type="match status" value="1"/>
</dbReference>
<dbReference type="HAMAP" id="MF_00537">
    <property type="entry name" value="Ribosomal_uS14_1"/>
    <property type="match status" value="1"/>
</dbReference>
<dbReference type="InterPro" id="IPR001209">
    <property type="entry name" value="Ribosomal_uS14"/>
</dbReference>
<dbReference type="InterPro" id="IPR023036">
    <property type="entry name" value="Ribosomal_uS14_bac/plastid"/>
</dbReference>
<dbReference type="InterPro" id="IPR018271">
    <property type="entry name" value="Ribosomal_uS14_CS"/>
</dbReference>
<dbReference type="NCBIfam" id="NF006477">
    <property type="entry name" value="PRK08881.1"/>
    <property type="match status" value="1"/>
</dbReference>
<dbReference type="PANTHER" id="PTHR19836">
    <property type="entry name" value="30S RIBOSOMAL PROTEIN S14"/>
    <property type="match status" value="1"/>
</dbReference>
<dbReference type="PANTHER" id="PTHR19836:SF19">
    <property type="entry name" value="SMALL RIBOSOMAL SUBUNIT PROTEIN US14M"/>
    <property type="match status" value="1"/>
</dbReference>
<dbReference type="Pfam" id="PF00253">
    <property type="entry name" value="Ribosomal_S14"/>
    <property type="match status" value="1"/>
</dbReference>
<dbReference type="SUPFAM" id="SSF57716">
    <property type="entry name" value="Glucocorticoid receptor-like (DNA-binding domain)"/>
    <property type="match status" value="1"/>
</dbReference>
<dbReference type="PROSITE" id="PS00527">
    <property type="entry name" value="RIBOSOMAL_S14"/>
    <property type="match status" value="1"/>
</dbReference>
<organism>
    <name type="scientific">Photobacterium profundum (strain SS9)</name>
    <dbReference type="NCBI Taxonomy" id="298386"/>
    <lineage>
        <taxon>Bacteria</taxon>
        <taxon>Pseudomonadati</taxon>
        <taxon>Pseudomonadota</taxon>
        <taxon>Gammaproteobacteria</taxon>
        <taxon>Vibrionales</taxon>
        <taxon>Vibrionaceae</taxon>
        <taxon>Photobacterium</taxon>
    </lineage>
</organism>
<comment type="function">
    <text evidence="1">Binds 16S rRNA, required for the assembly of 30S particles and may also be responsible for determining the conformation of the 16S rRNA at the A site.</text>
</comment>
<comment type="subunit">
    <text evidence="1">Part of the 30S ribosomal subunit. Contacts proteins S3 and S10.</text>
</comment>
<comment type="similarity">
    <text evidence="1">Belongs to the universal ribosomal protein uS14 family.</text>
</comment>
<name>RS14_PHOPR</name>
<keyword id="KW-1185">Reference proteome</keyword>
<keyword id="KW-0687">Ribonucleoprotein</keyword>
<keyword id="KW-0689">Ribosomal protein</keyword>
<keyword id="KW-0694">RNA-binding</keyword>
<keyword id="KW-0699">rRNA-binding</keyword>
<proteinExistence type="inferred from homology"/>
<feature type="chain" id="PRO_1000128487" description="Small ribosomal subunit protein uS14">
    <location>
        <begin position="1"/>
        <end position="101"/>
    </location>
</feature>
<reference key="1">
    <citation type="journal article" date="2005" name="Science">
        <title>Life at depth: Photobacterium profundum genome sequence and expression analysis.</title>
        <authorList>
            <person name="Vezzi A."/>
            <person name="Campanaro S."/>
            <person name="D'Angelo M."/>
            <person name="Simonato F."/>
            <person name="Vitulo N."/>
            <person name="Lauro F.M."/>
            <person name="Cestaro A."/>
            <person name="Malacrida G."/>
            <person name="Simionati B."/>
            <person name="Cannata N."/>
            <person name="Romualdi C."/>
            <person name="Bartlett D.H."/>
            <person name="Valle G."/>
        </authorList>
    </citation>
    <scope>NUCLEOTIDE SEQUENCE [LARGE SCALE GENOMIC DNA]</scope>
    <source>
        <strain>ATCC BAA-1253 / SS9</strain>
    </source>
</reference>
<sequence>MAKESMKAREAKRAKLVAKFAEKRAALKVIISDVNASEEDRWNAVLKLQSLPRDSSSSRQRNRCNQTGRPHGYLRKFGLSRIKVRETCMKGEIPGLRKASW</sequence>
<accession>Q6LVA3</accession>
<evidence type="ECO:0000255" key="1">
    <source>
        <dbReference type="HAMAP-Rule" id="MF_00537"/>
    </source>
</evidence>
<evidence type="ECO:0000305" key="2"/>
<gene>
    <name evidence="1" type="primary">rpsN</name>
    <name type="ordered locus">PBPRA0333</name>
</gene>